<protein>
    <recommendedName>
        <fullName evidence="1">Small ribosomal subunit protein uS19</fullName>
    </recommendedName>
    <alternativeName>
        <fullName evidence="2">30S ribosomal protein S19</fullName>
    </alternativeName>
</protein>
<proteinExistence type="inferred from homology"/>
<gene>
    <name evidence="1" type="primary">rpsS</name>
    <name type="ordered locus">DP1128</name>
</gene>
<dbReference type="EMBL" id="CR522870">
    <property type="protein sequence ID" value="CAG35857.1"/>
    <property type="molecule type" value="Genomic_DNA"/>
</dbReference>
<dbReference type="RefSeq" id="WP_011188371.1">
    <property type="nucleotide sequence ID" value="NC_006138.1"/>
</dbReference>
<dbReference type="SMR" id="Q6AP67"/>
<dbReference type="STRING" id="177439.DP1128"/>
<dbReference type="KEGG" id="dps:DP1128"/>
<dbReference type="eggNOG" id="COG0185">
    <property type="taxonomic scope" value="Bacteria"/>
</dbReference>
<dbReference type="HOGENOM" id="CLU_144911_0_1_7"/>
<dbReference type="OrthoDB" id="9797833at2"/>
<dbReference type="Proteomes" id="UP000000602">
    <property type="component" value="Chromosome"/>
</dbReference>
<dbReference type="GO" id="GO:0005737">
    <property type="term" value="C:cytoplasm"/>
    <property type="evidence" value="ECO:0007669"/>
    <property type="project" value="UniProtKB-ARBA"/>
</dbReference>
<dbReference type="GO" id="GO:0015935">
    <property type="term" value="C:small ribosomal subunit"/>
    <property type="evidence" value="ECO:0007669"/>
    <property type="project" value="InterPro"/>
</dbReference>
<dbReference type="GO" id="GO:0019843">
    <property type="term" value="F:rRNA binding"/>
    <property type="evidence" value="ECO:0007669"/>
    <property type="project" value="UniProtKB-UniRule"/>
</dbReference>
<dbReference type="GO" id="GO:0003735">
    <property type="term" value="F:structural constituent of ribosome"/>
    <property type="evidence" value="ECO:0007669"/>
    <property type="project" value="InterPro"/>
</dbReference>
<dbReference type="GO" id="GO:0000028">
    <property type="term" value="P:ribosomal small subunit assembly"/>
    <property type="evidence" value="ECO:0007669"/>
    <property type="project" value="TreeGrafter"/>
</dbReference>
<dbReference type="GO" id="GO:0006412">
    <property type="term" value="P:translation"/>
    <property type="evidence" value="ECO:0007669"/>
    <property type="project" value="UniProtKB-UniRule"/>
</dbReference>
<dbReference type="FunFam" id="3.30.860.10:FF:000001">
    <property type="entry name" value="30S ribosomal protein S19"/>
    <property type="match status" value="1"/>
</dbReference>
<dbReference type="Gene3D" id="3.30.860.10">
    <property type="entry name" value="30s Ribosomal Protein S19, Chain A"/>
    <property type="match status" value="1"/>
</dbReference>
<dbReference type="HAMAP" id="MF_00531">
    <property type="entry name" value="Ribosomal_uS19"/>
    <property type="match status" value="1"/>
</dbReference>
<dbReference type="InterPro" id="IPR002222">
    <property type="entry name" value="Ribosomal_uS19"/>
</dbReference>
<dbReference type="InterPro" id="IPR005732">
    <property type="entry name" value="Ribosomal_uS19_bac-type"/>
</dbReference>
<dbReference type="InterPro" id="IPR020934">
    <property type="entry name" value="Ribosomal_uS19_CS"/>
</dbReference>
<dbReference type="InterPro" id="IPR023575">
    <property type="entry name" value="Ribosomal_uS19_SF"/>
</dbReference>
<dbReference type="NCBIfam" id="TIGR01050">
    <property type="entry name" value="rpsS_bact"/>
    <property type="match status" value="1"/>
</dbReference>
<dbReference type="PANTHER" id="PTHR11880">
    <property type="entry name" value="RIBOSOMAL PROTEIN S19P FAMILY MEMBER"/>
    <property type="match status" value="1"/>
</dbReference>
<dbReference type="PANTHER" id="PTHR11880:SF8">
    <property type="entry name" value="SMALL RIBOSOMAL SUBUNIT PROTEIN US19M"/>
    <property type="match status" value="1"/>
</dbReference>
<dbReference type="Pfam" id="PF00203">
    <property type="entry name" value="Ribosomal_S19"/>
    <property type="match status" value="1"/>
</dbReference>
<dbReference type="PIRSF" id="PIRSF002144">
    <property type="entry name" value="Ribosomal_S19"/>
    <property type="match status" value="1"/>
</dbReference>
<dbReference type="PRINTS" id="PR00975">
    <property type="entry name" value="RIBOSOMALS19"/>
</dbReference>
<dbReference type="SUPFAM" id="SSF54570">
    <property type="entry name" value="Ribosomal protein S19"/>
    <property type="match status" value="1"/>
</dbReference>
<dbReference type="PROSITE" id="PS00323">
    <property type="entry name" value="RIBOSOMAL_S19"/>
    <property type="match status" value="1"/>
</dbReference>
<reference key="1">
    <citation type="journal article" date="2004" name="Environ. Microbiol.">
        <title>The genome of Desulfotalea psychrophila, a sulfate-reducing bacterium from permanently cold Arctic sediments.</title>
        <authorList>
            <person name="Rabus R."/>
            <person name="Ruepp A."/>
            <person name="Frickey T."/>
            <person name="Rattei T."/>
            <person name="Fartmann B."/>
            <person name="Stark M."/>
            <person name="Bauer M."/>
            <person name="Zibat A."/>
            <person name="Lombardot T."/>
            <person name="Becker I."/>
            <person name="Amann J."/>
            <person name="Gellner K."/>
            <person name="Teeling H."/>
            <person name="Leuschner W.D."/>
            <person name="Gloeckner F.-O."/>
            <person name="Lupas A.N."/>
            <person name="Amann R."/>
            <person name="Klenk H.-P."/>
        </authorList>
    </citation>
    <scope>NUCLEOTIDE SEQUENCE [LARGE SCALE GENOMIC DNA]</scope>
    <source>
        <strain>DSM 12343 / LSv54</strain>
    </source>
</reference>
<sequence length="91" mass="10322">MSRSIKKGPFIDDHLQKKVDQSLESGSRKVIKTWSRRSDISPEMVGLTFAVHNGKKFIPVFVSENMVGHKLGEFSPTRTYYGHSADKKGKR</sequence>
<comment type="function">
    <text evidence="1">Protein S19 forms a complex with S13 that binds strongly to the 16S ribosomal RNA.</text>
</comment>
<comment type="similarity">
    <text evidence="1">Belongs to the universal ribosomal protein uS19 family.</text>
</comment>
<name>RS19_DESPS</name>
<feature type="chain" id="PRO_0000129817" description="Small ribosomal subunit protein uS19">
    <location>
        <begin position="1"/>
        <end position="91"/>
    </location>
</feature>
<organism>
    <name type="scientific">Desulfotalea psychrophila (strain LSv54 / DSM 12343)</name>
    <dbReference type="NCBI Taxonomy" id="177439"/>
    <lineage>
        <taxon>Bacteria</taxon>
        <taxon>Pseudomonadati</taxon>
        <taxon>Thermodesulfobacteriota</taxon>
        <taxon>Desulfobulbia</taxon>
        <taxon>Desulfobulbales</taxon>
        <taxon>Desulfocapsaceae</taxon>
        <taxon>Desulfotalea</taxon>
    </lineage>
</organism>
<accession>Q6AP67</accession>
<keyword id="KW-1185">Reference proteome</keyword>
<keyword id="KW-0687">Ribonucleoprotein</keyword>
<keyword id="KW-0689">Ribosomal protein</keyword>
<keyword id="KW-0694">RNA-binding</keyword>
<keyword id="KW-0699">rRNA-binding</keyword>
<evidence type="ECO:0000255" key="1">
    <source>
        <dbReference type="HAMAP-Rule" id="MF_00531"/>
    </source>
</evidence>
<evidence type="ECO:0000305" key="2"/>